<keyword id="KW-0963">Cytoplasm</keyword>
<keyword id="KW-0396">Initiation factor</keyword>
<keyword id="KW-0648">Protein biosynthesis</keyword>
<keyword id="KW-1185">Reference proteome</keyword>
<keyword id="KW-0694">RNA-binding</keyword>
<sequence length="532" mass="58652">MALRLPALLDANAPWGPPSTVPEDLKFDDVPYAPFSKGDKLGKVADWAAETKDGKDQKRTQFGKNFRDPYHAYGASSASFFTNEDAEELSSFSVVDNAKNANKPRGTATVLKTRGGAPRGGSFAGRGGSQRGGRFQNQPGRGPVGGQRGPNPRFGKSKFGWRDFDKPQRIRNASVDITDDWTEIQEITYSEMQKLSYDVAQGVEIDTYGDLFPYDRKFDRTNNITKLAHLGRTVFNTTTSEDPIMQELAKDPANRIFITDTILSQIMCTTKSVAPWDIVITKKGEQLFFDKREGGPLDFITVDENAADPPADSTDKDNINSSANLGFEATLINQNFASNAITEDPKSKVSYKANPFSNNDSNVLCHAYKYKKFNLSDDPEGAPLNLILRTEVDALGPDGTTLNLRVLNEYGSSEWKNKFNTGRGAIIAAELKHNLNKISRWTVQSILGDVDQMKIGFASRVSPKDNTQHNIIGVVSREPKQFAEQINVNLNNGWGIFKSVVNIATAKDDGKYVLVKDPNNPAVKIYKPAAGF</sequence>
<proteinExistence type="inferred from homology"/>
<gene>
    <name type="ordered locus">YALI0F14839g</name>
</gene>
<reference key="1">
    <citation type="journal article" date="2004" name="Nature">
        <title>Genome evolution in yeasts.</title>
        <authorList>
            <person name="Dujon B."/>
            <person name="Sherman D."/>
            <person name="Fischer G."/>
            <person name="Durrens P."/>
            <person name="Casaregola S."/>
            <person name="Lafontaine I."/>
            <person name="de Montigny J."/>
            <person name="Marck C."/>
            <person name="Neuveglise C."/>
            <person name="Talla E."/>
            <person name="Goffard N."/>
            <person name="Frangeul L."/>
            <person name="Aigle M."/>
            <person name="Anthouard V."/>
            <person name="Babour A."/>
            <person name="Barbe V."/>
            <person name="Barnay S."/>
            <person name="Blanchin S."/>
            <person name="Beckerich J.-M."/>
            <person name="Beyne E."/>
            <person name="Bleykasten C."/>
            <person name="Boisrame A."/>
            <person name="Boyer J."/>
            <person name="Cattolico L."/>
            <person name="Confanioleri F."/>
            <person name="de Daruvar A."/>
            <person name="Despons L."/>
            <person name="Fabre E."/>
            <person name="Fairhead C."/>
            <person name="Ferry-Dumazet H."/>
            <person name="Groppi A."/>
            <person name="Hantraye F."/>
            <person name="Hennequin C."/>
            <person name="Jauniaux N."/>
            <person name="Joyet P."/>
            <person name="Kachouri R."/>
            <person name="Kerrest A."/>
            <person name="Koszul R."/>
            <person name="Lemaire M."/>
            <person name="Lesur I."/>
            <person name="Ma L."/>
            <person name="Muller H."/>
            <person name="Nicaud J.-M."/>
            <person name="Nikolski M."/>
            <person name="Oztas S."/>
            <person name="Ozier-Kalogeropoulos O."/>
            <person name="Pellenz S."/>
            <person name="Potier S."/>
            <person name="Richard G.-F."/>
            <person name="Straub M.-L."/>
            <person name="Suleau A."/>
            <person name="Swennen D."/>
            <person name="Tekaia F."/>
            <person name="Wesolowski-Louvel M."/>
            <person name="Westhof E."/>
            <person name="Wirth B."/>
            <person name="Zeniou-Meyer M."/>
            <person name="Zivanovic Y."/>
            <person name="Bolotin-Fukuhara M."/>
            <person name="Thierry A."/>
            <person name="Bouchier C."/>
            <person name="Caudron B."/>
            <person name="Scarpelli C."/>
            <person name="Gaillardin C."/>
            <person name="Weissenbach J."/>
            <person name="Wincker P."/>
            <person name="Souciet J.-L."/>
        </authorList>
    </citation>
    <scope>NUCLEOTIDE SEQUENCE [LARGE SCALE GENOMIC DNA]</scope>
    <source>
        <strain>CLIB 122 / E 150</strain>
    </source>
</reference>
<accession>Q6C1N1</accession>
<feature type="chain" id="PRO_0000364181" description="Eukaryotic translation initiation factor 3 subunit D">
    <location>
        <begin position="1"/>
        <end position="532"/>
    </location>
</feature>
<feature type="region of interest" description="Disordered" evidence="3">
    <location>
        <begin position="108"/>
        <end position="161"/>
    </location>
</feature>
<feature type="region of interest" description="RNA gate" evidence="1">
    <location>
        <begin position="296"/>
        <end position="310"/>
    </location>
</feature>
<feature type="compositionally biased region" description="Gly residues" evidence="3">
    <location>
        <begin position="117"/>
        <end position="131"/>
    </location>
</feature>
<feature type="compositionally biased region" description="Low complexity" evidence="3">
    <location>
        <begin position="132"/>
        <end position="141"/>
    </location>
</feature>
<comment type="function">
    <text evidence="2">mRNA cap-binding component of the eukaryotic translation initiation factor 3 (eIF-3) complex, which is involved in protein synthesis of a specialized repertoire of mRNAs and, together with other initiation factors, stimulates binding of mRNA and methionyl-tRNAi to the 40S ribosome. The eIF-3 complex specifically targets and initiates translation of a subset of mRNAs involved in cell proliferation. In the eIF-3 complex, eif3d specifically recognizes and binds the 7-methylguanosine cap of a subset of mRNAs.</text>
</comment>
<comment type="subunit">
    <text evidence="2">Component of the eukaryotic translation initiation factor 3 (eIF-3) complex.</text>
</comment>
<comment type="subcellular location">
    <subcellularLocation>
        <location evidence="2">Cytoplasm</location>
    </subcellularLocation>
</comment>
<comment type="domain">
    <text evidence="2">The RNA gate region regulates mRNA cap recognition to prevent promiscuous mRNA-binding before assembly of eif3d into the full eukaryotic translation initiation factor 3 (eIF-3) complex.</text>
</comment>
<comment type="similarity">
    <text evidence="2">Belongs to the eIF-3 subunit D family.</text>
</comment>
<name>EIF3D_YARLI</name>
<evidence type="ECO:0000250" key="1">
    <source>
        <dbReference type="UniProtKB" id="K7IM66"/>
    </source>
</evidence>
<evidence type="ECO:0000255" key="2">
    <source>
        <dbReference type="HAMAP-Rule" id="MF_03003"/>
    </source>
</evidence>
<evidence type="ECO:0000256" key="3">
    <source>
        <dbReference type="SAM" id="MobiDB-lite"/>
    </source>
</evidence>
<dbReference type="EMBL" id="CR382132">
    <property type="protein sequence ID" value="CAG78240.1"/>
    <property type="molecule type" value="Genomic_DNA"/>
</dbReference>
<dbReference type="RefSeq" id="XP_505431.1">
    <property type="nucleotide sequence ID" value="XM_505431.1"/>
</dbReference>
<dbReference type="SMR" id="Q6C1N1"/>
<dbReference type="STRING" id="284591.Q6C1N1"/>
<dbReference type="EnsemblFungi" id="CAG78240">
    <property type="protein sequence ID" value="CAG78240"/>
    <property type="gene ID" value="YALI0_F14839g"/>
</dbReference>
<dbReference type="KEGG" id="yli:2908675"/>
<dbReference type="VEuPathDB" id="FungiDB:YALI0_F14839g"/>
<dbReference type="HOGENOM" id="CLU_024521_2_0_1"/>
<dbReference type="InParanoid" id="Q6C1N1"/>
<dbReference type="OMA" id="FMDKRDN"/>
<dbReference type="OrthoDB" id="109899at4891"/>
<dbReference type="Proteomes" id="UP000001300">
    <property type="component" value="Chromosome F"/>
</dbReference>
<dbReference type="GO" id="GO:0005829">
    <property type="term" value="C:cytosol"/>
    <property type="evidence" value="ECO:0007669"/>
    <property type="project" value="EnsemblFungi"/>
</dbReference>
<dbReference type="GO" id="GO:0016282">
    <property type="term" value="C:eukaryotic 43S preinitiation complex"/>
    <property type="evidence" value="ECO:0007669"/>
    <property type="project" value="UniProtKB-UniRule"/>
</dbReference>
<dbReference type="GO" id="GO:0033290">
    <property type="term" value="C:eukaryotic 48S preinitiation complex"/>
    <property type="evidence" value="ECO:0007669"/>
    <property type="project" value="UniProtKB-UniRule"/>
</dbReference>
<dbReference type="GO" id="GO:0005852">
    <property type="term" value="C:eukaryotic translation initiation factor 3 complex"/>
    <property type="evidence" value="ECO:0000318"/>
    <property type="project" value="GO_Central"/>
</dbReference>
<dbReference type="GO" id="GO:0071540">
    <property type="term" value="C:eukaryotic translation initiation factor 3 complex, eIF3e"/>
    <property type="evidence" value="ECO:0007669"/>
    <property type="project" value="EnsemblFungi"/>
</dbReference>
<dbReference type="GO" id="GO:0071541">
    <property type="term" value="C:eukaryotic translation initiation factor 3 complex, eIF3m"/>
    <property type="evidence" value="ECO:0007669"/>
    <property type="project" value="EnsemblFungi"/>
</dbReference>
<dbReference type="GO" id="GO:0098808">
    <property type="term" value="F:mRNA cap binding"/>
    <property type="evidence" value="ECO:0007669"/>
    <property type="project" value="UniProtKB-UniRule"/>
</dbReference>
<dbReference type="GO" id="GO:0003743">
    <property type="term" value="F:translation initiation factor activity"/>
    <property type="evidence" value="ECO:0000318"/>
    <property type="project" value="GO_Central"/>
</dbReference>
<dbReference type="GO" id="GO:0002191">
    <property type="term" value="P:cap-dependent translational initiation"/>
    <property type="evidence" value="ECO:0007669"/>
    <property type="project" value="UniProtKB-UniRule"/>
</dbReference>
<dbReference type="GO" id="GO:0001732">
    <property type="term" value="P:formation of cytoplasmic translation initiation complex"/>
    <property type="evidence" value="ECO:0007669"/>
    <property type="project" value="UniProtKB-UniRule"/>
</dbReference>
<dbReference type="GO" id="GO:0006413">
    <property type="term" value="P:translational initiation"/>
    <property type="evidence" value="ECO:0000318"/>
    <property type="project" value="GO_Central"/>
</dbReference>
<dbReference type="HAMAP" id="MF_03003">
    <property type="entry name" value="eIF3d"/>
    <property type="match status" value="1"/>
</dbReference>
<dbReference type="InterPro" id="IPR007783">
    <property type="entry name" value="eIF3d"/>
</dbReference>
<dbReference type="PANTHER" id="PTHR12399">
    <property type="entry name" value="EUKARYOTIC TRANSLATION INITIATION FACTOR 3 SUBUNIT 7"/>
    <property type="match status" value="1"/>
</dbReference>
<dbReference type="PANTHER" id="PTHR12399:SF0">
    <property type="entry name" value="EUKARYOTIC TRANSLATION INITIATION FACTOR 3 SUBUNIT D"/>
    <property type="match status" value="1"/>
</dbReference>
<dbReference type="Pfam" id="PF05091">
    <property type="entry name" value="eIF-3_zeta"/>
    <property type="match status" value="1"/>
</dbReference>
<dbReference type="PIRSF" id="PIRSF016281">
    <property type="entry name" value="EIF-3_zeta"/>
    <property type="match status" value="1"/>
</dbReference>
<protein>
    <recommendedName>
        <fullName evidence="2">Eukaryotic translation initiation factor 3 subunit D</fullName>
        <shortName evidence="2">eIF3d</shortName>
    </recommendedName>
</protein>
<organism>
    <name type="scientific">Yarrowia lipolytica (strain CLIB 122 / E 150)</name>
    <name type="common">Yeast</name>
    <name type="synonym">Candida lipolytica</name>
    <dbReference type="NCBI Taxonomy" id="284591"/>
    <lineage>
        <taxon>Eukaryota</taxon>
        <taxon>Fungi</taxon>
        <taxon>Dikarya</taxon>
        <taxon>Ascomycota</taxon>
        <taxon>Saccharomycotina</taxon>
        <taxon>Dipodascomycetes</taxon>
        <taxon>Dipodascales</taxon>
        <taxon>Dipodascales incertae sedis</taxon>
        <taxon>Yarrowia</taxon>
    </lineage>
</organism>